<gene>
    <name evidence="1" type="primary">ftsA</name>
    <name type="ordered locus">R02169</name>
    <name type="ORF">SMc01873</name>
</gene>
<protein>
    <recommendedName>
        <fullName evidence="1">Cell division protein FtsA</fullName>
    </recommendedName>
</protein>
<name>FTSA_RHIME</name>
<evidence type="ECO:0000255" key="1">
    <source>
        <dbReference type="HAMAP-Rule" id="MF_02033"/>
    </source>
</evidence>
<feature type="chain" id="PRO_0000062744" description="Cell division protein FtsA">
    <location>
        <begin position="1"/>
        <end position="442"/>
    </location>
</feature>
<accession>O30994</accession>
<reference key="1">
    <citation type="journal article" date="1997" name="J. Bacteriol.">
        <title>Interactions between heterologous FtsA and FtsZ proteins at the FtsZ ring.</title>
        <authorList>
            <person name="Ma X."/>
            <person name="Sun Q."/>
            <person name="Wang R."/>
            <person name="Singh G."/>
            <person name="Jonietz E.L."/>
            <person name="Margolin W."/>
        </authorList>
    </citation>
    <scope>NUCLEOTIDE SEQUENCE [GENOMIC DNA]</scope>
    <source>
        <strain>1021</strain>
    </source>
</reference>
<reference key="2">
    <citation type="journal article" date="2001" name="Proc. Natl. Acad. Sci. U.S.A.">
        <title>Analysis of the chromosome sequence of the legume symbiont Sinorhizobium meliloti strain 1021.</title>
        <authorList>
            <person name="Capela D."/>
            <person name="Barloy-Hubler F."/>
            <person name="Gouzy J."/>
            <person name="Bothe G."/>
            <person name="Ampe F."/>
            <person name="Batut J."/>
            <person name="Boistard P."/>
            <person name="Becker A."/>
            <person name="Boutry M."/>
            <person name="Cadieu E."/>
            <person name="Dreano S."/>
            <person name="Gloux S."/>
            <person name="Godrie T."/>
            <person name="Goffeau A."/>
            <person name="Kahn D."/>
            <person name="Kiss E."/>
            <person name="Lelaure V."/>
            <person name="Masuy D."/>
            <person name="Pohl T."/>
            <person name="Portetelle D."/>
            <person name="Puehler A."/>
            <person name="Purnelle B."/>
            <person name="Ramsperger U."/>
            <person name="Renard C."/>
            <person name="Thebault P."/>
            <person name="Vandenbol M."/>
            <person name="Weidner S."/>
            <person name="Galibert F."/>
        </authorList>
    </citation>
    <scope>NUCLEOTIDE SEQUENCE [LARGE SCALE GENOMIC DNA]</scope>
    <source>
        <strain>1021</strain>
    </source>
</reference>
<reference key="3">
    <citation type="journal article" date="2001" name="Science">
        <title>The composite genome of the legume symbiont Sinorhizobium meliloti.</title>
        <authorList>
            <person name="Galibert F."/>
            <person name="Finan T.M."/>
            <person name="Long S.R."/>
            <person name="Puehler A."/>
            <person name="Abola P."/>
            <person name="Ampe F."/>
            <person name="Barloy-Hubler F."/>
            <person name="Barnett M.J."/>
            <person name="Becker A."/>
            <person name="Boistard P."/>
            <person name="Bothe G."/>
            <person name="Boutry M."/>
            <person name="Bowser L."/>
            <person name="Buhrmester J."/>
            <person name="Cadieu E."/>
            <person name="Capela D."/>
            <person name="Chain P."/>
            <person name="Cowie A."/>
            <person name="Davis R.W."/>
            <person name="Dreano S."/>
            <person name="Federspiel N.A."/>
            <person name="Fisher R.F."/>
            <person name="Gloux S."/>
            <person name="Godrie T."/>
            <person name="Goffeau A."/>
            <person name="Golding B."/>
            <person name="Gouzy J."/>
            <person name="Gurjal M."/>
            <person name="Hernandez-Lucas I."/>
            <person name="Hong A."/>
            <person name="Huizar L."/>
            <person name="Hyman R.W."/>
            <person name="Jones T."/>
            <person name="Kahn D."/>
            <person name="Kahn M.L."/>
            <person name="Kalman S."/>
            <person name="Keating D.H."/>
            <person name="Kiss E."/>
            <person name="Komp C."/>
            <person name="Lelaure V."/>
            <person name="Masuy D."/>
            <person name="Palm C."/>
            <person name="Peck M.C."/>
            <person name="Pohl T.M."/>
            <person name="Portetelle D."/>
            <person name="Purnelle B."/>
            <person name="Ramsperger U."/>
            <person name="Surzycki R."/>
            <person name="Thebault P."/>
            <person name="Vandenbol M."/>
            <person name="Vorhoelter F.J."/>
            <person name="Weidner S."/>
            <person name="Wells D.H."/>
            <person name="Wong K."/>
            <person name="Yeh K.-C."/>
            <person name="Batut J."/>
        </authorList>
    </citation>
    <scope>NUCLEOTIDE SEQUENCE [LARGE SCALE GENOMIC DNA]</scope>
    <source>
        <strain>1021</strain>
    </source>
</reference>
<comment type="function">
    <text evidence="1">Cell division protein that is involved in the assembly of the Z ring. May serve as a membrane anchor for the Z ring.</text>
</comment>
<comment type="subunit">
    <text evidence="1">Self-interacts. Interacts with FtsZ.</text>
</comment>
<comment type="subcellular location">
    <subcellularLocation>
        <location evidence="1">Cell inner membrane</location>
        <topology evidence="1">Peripheral membrane protein</topology>
        <orientation evidence="1">Cytoplasmic side</orientation>
    </subcellularLocation>
    <text evidence="1">Localizes to the Z ring in an FtsZ-dependent manner. Targeted to the membrane through a conserved C-terminal amphipathic helix.</text>
</comment>
<comment type="similarity">
    <text evidence="1">Belongs to the FtsA/MreB family.</text>
</comment>
<keyword id="KW-0131">Cell cycle</keyword>
<keyword id="KW-0132">Cell division</keyword>
<keyword id="KW-0997">Cell inner membrane</keyword>
<keyword id="KW-1003">Cell membrane</keyword>
<keyword id="KW-0472">Membrane</keyword>
<keyword id="KW-1185">Reference proteome</keyword>
<sequence length="442" mass="46688">MSLFGSANFGLPRLKPLPSKRSHVVSVLDIGSTKVVCMIGRLTPRAESQILPGRTHSIEVIGIGHQKSRGVKNGVIADLDAVESVVRLAVDAAERMAGLTIDSLIVNVSAGRLQSDVYTATIDLGGQEVEANDLKKVLAAAGHQSLRTDRAILHSLPTGFSLDGERGIRDPLAMFGDVLGVDMHVLTAERPALKNLELCVNRAHLSVEGMVATPYASGLAALVDDEVELGCAAIDMGGGTTTISVFAEGKLVHADAVGLGGHHVTTDLARGLSTRIEDAERLKVVHGSALPNSADERDIISVPPIGEDDRDQPTHVPRALVSRIVRARIEETLELIRDRIQRSGFSPIVGKRIVLTGGASQLTGLPEAARRILARNVRIGRPLGVSGLPAAAKGPAFSTAVGLMIYPQVADLETHAAGSGMFSTLGGNSRFARMGQWLKESF</sequence>
<dbReference type="EMBL" id="AF024660">
    <property type="protein sequence ID" value="AAC45823.1"/>
    <property type="molecule type" value="Genomic_DNA"/>
</dbReference>
<dbReference type="EMBL" id="AL591688">
    <property type="protein sequence ID" value="CAC46748.1"/>
    <property type="molecule type" value="Genomic_DNA"/>
</dbReference>
<dbReference type="RefSeq" id="NP_386275.1">
    <property type="nucleotide sequence ID" value="NC_003047.1"/>
</dbReference>
<dbReference type="RefSeq" id="WP_010969742.1">
    <property type="nucleotide sequence ID" value="NC_003047.1"/>
</dbReference>
<dbReference type="SMR" id="O30994"/>
<dbReference type="EnsemblBacteria" id="CAC46748">
    <property type="protein sequence ID" value="CAC46748"/>
    <property type="gene ID" value="SMc01873"/>
</dbReference>
<dbReference type="KEGG" id="sme:SMc01873"/>
<dbReference type="PATRIC" id="fig|266834.11.peg.3635"/>
<dbReference type="eggNOG" id="COG0849">
    <property type="taxonomic scope" value="Bacteria"/>
</dbReference>
<dbReference type="HOGENOM" id="CLU_037850_3_0_5"/>
<dbReference type="OrthoDB" id="9810567at2"/>
<dbReference type="Proteomes" id="UP000001976">
    <property type="component" value="Chromosome"/>
</dbReference>
<dbReference type="GO" id="GO:0032153">
    <property type="term" value="C:cell division site"/>
    <property type="evidence" value="ECO:0007669"/>
    <property type="project" value="UniProtKB-UniRule"/>
</dbReference>
<dbReference type="GO" id="GO:0009898">
    <property type="term" value="C:cytoplasmic side of plasma membrane"/>
    <property type="evidence" value="ECO:0007669"/>
    <property type="project" value="UniProtKB-UniRule"/>
</dbReference>
<dbReference type="GO" id="GO:0043093">
    <property type="term" value="P:FtsZ-dependent cytokinesis"/>
    <property type="evidence" value="ECO:0007669"/>
    <property type="project" value="UniProtKB-UniRule"/>
</dbReference>
<dbReference type="CDD" id="cd24048">
    <property type="entry name" value="ASKHA_NBD_FtsA"/>
    <property type="match status" value="1"/>
</dbReference>
<dbReference type="Gene3D" id="3.30.420.40">
    <property type="match status" value="2"/>
</dbReference>
<dbReference type="HAMAP" id="MF_02033">
    <property type="entry name" value="FtsA"/>
    <property type="match status" value="1"/>
</dbReference>
<dbReference type="InterPro" id="IPR043129">
    <property type="entry name" value="ATPase_NBD"/>
</dbReference>
<dbReference type="InterPro" id="IPR020823">
    <property type="entry name" value="Cell_div_FtsA"/>
</dbReference>
<dbReference type="InterPro" id="IPR050696">
    <property type="entry name" value="FtsA/MreB"/>
</dbReference>
<dbReference type="InterPro" id="IPR003494">
    <property type="entry name" value="SHS2_FtsA"/>
</dbReference>
<dbReference type="NCBIfam" id="TIGR01174">
    <property type="entry name" value="ftsA"/>
    <property type="match status" value="1"/>
</dbReference>
<dbReference type="PANTHER" id="PTHR32432:SF4">
    <property type="entry name" value="CELL DIVISION PROTEIN FTSA"/>
    <property type="match status" value="1"/>
</dbReference>
<dbReference type="PANTHER" id="PTHR32432">
    <property type="entry name" value="CELL DIVISION PROTEIN FTSA-RELATED"/>
    <property type="match status" value="1"/>
</dbReference>
<dbReference type="Pfam" id="PF14450">
    <property type="entry name" value="FtsA"/>
    <property type="match status" value="2"/>
</dbReference>
<dbReference type="Pfam" id="PF02491">
    <property type="entry name" value="SHS2_FTSA"/>
    <property type="match status" value="1"/>
</dbReference>
<dbReference type="PIRSF" id="PIRSF003101">
    <property type="entry name" value="FtsA"/>
    <property type="match status" value="1"/>
</dbReference>
<dbReference type="SMART" id="SM00842">
    <property type="entry name" value="FtsA"/>
    <property type="match status" value="1"/>
</dbReference>
<dbReference type="SUPFAM" id="SSF53067">
    <property type="entry name" value="Actin-like ATPase domain"/>
    <property type="match status" value="2"/>
</dbReference>
<organism>
    <name type="scientific">Rhizobium meliloti (strain 1021)</name>
    <name type="common">Ensifer meliloti</name>
    <name type="synonym">Sinorhizobium meliloti</name>
    <dbReference type="NCBI Taxonomy" id="266834"/>
    <lineage>
        <taxon>Bacteria</taxon>
        <taxon>Pseudomonadati</taxon>
        <taxon>Pseudomonadota</taxon>
        <taxon>Alphaproteobacteria</taxon>
        <taxon>Hyphomicrobiales</taxon>
        <taxon>Rhizobiaceae</taxon>
        <taxon>Sinorhizobium/Ensifer group</taxon>
        <taxon>Sinorhizobium</taxon>
    </lineage>
</organism>
<proteinExistence type="inferred from homology"/>